<sequence>MNLANYFPVLLFILVGIGVGLVPMFLGKILAPSKPDAEKLSPYECGFEAFEDARMKFDVRYYLIAILFILFDLETAFLFPWGVALRDIGWLGYASMVIFLLEFIVGFVYIWKKGALDWE</sequence>
<evidence type="ECO:0000255" key="1">
    <source>
        <dbReference type="HAMAP-Rule" id="MF_01394"/>
    </source>
</evidence>
<keyword id="KW-0997">Cell inner membrane</keyword>
<keyword id="KW-1003">Cell membrane</keyword>
<keyword id="KW-0472">Membrane</keyword>
<keyword id="KW-0520">NAD</keyword>
<keyword id="KW-0874">Quinone</keyword>
<keyword id="KW-1278">Translocase</keyword>
<keyword id="KW-0812">Transmembrane</keyword>
<keyword id="KW-1133">Transmembrane helix</keyword>
<keyword id="KW-0813">Transport</keyword>
<keyword id="KW-0830">Ubiquinone</keyword>
<name>NUOA_POLNS</name>
<reference key="1">
    <citation type="journal article" date="2013" name="Proc. Natl. Acad. Sci. U.S.A.">
        <title>Polynucleobacter necessarius, a model for genome reduction in both free-living and symbiotic bacteria.</title>
        <authorList>
            <person name="Boscaro V."/>
            <person name="Felletti M."/>
            <person name="Vannini C."/>
            <person name="Ackerman M.S."/>
            <person name="Chain P.S."/>
            <person name="Malfatti S."/>
            <person name="Vergez L.M."/>
            <person name="Shin M."/>
            <person name="Doak T.G."/>
            <person name="Lynch M."/>
            <person name="Petroni G."/>
        </authorList>
    </citation>
    <scope>NUCLEOTIDE SEQUENCE [LARGE SCALE GENOMIC DNA]</scope>
    <source>
        <strain>STIR1</strain>
    </source>
</reference>
<gene>
    <name evidence="1" type="primary">nuoA</name>
    <name type="ordered locus">Pnec_0821</name>
</gene>
<protein>
    <recommendedName>
        <fullName evidence="1">NADH-quinone oxidoreductase subunit A</fullName>
        <ecNumber evidence="1">7.1.1.-</ecNumber>
    </recommendedName>
    <alternativeName>
        <fullName evidence="1">NADH dehydrogenase I subunit A</fullName>
    </alternativeName>
    <alternativeName>
        <fullName evidence="1">NDH-1 subunit A</fullName>
    </alternativeName>
    <alternativeName>
        <fullName evidence="1">NUO1</fullName>
    </alternativeName>
</protein>
<organism>
    <name type="scientific">Polynucleobacter necessarius subsp. necessarius (strain STIR1)</name>
    <dbReference type="NCBI Taxonomy" id="452638"/>
    <lineage>
        <taxon>Bacteria</taxon>
        <taxon>Pseudomonadati</taxon>
        <taxon>Pseudomonadota</taxon>
        <taxon>Betaproteobacteria</taxon>
        <taxon>Burkholderiales</taxon>
        <taxon>Burkholderiaceae</taxon>
        <taxon>Polynucleobacter</taxon>
    </lineage>
</organism>
<comment type="function">
    <text evidence="1">NDH-1 shuttles electrons from NADH, via FMN and iron-sulfur (Fe-S) centers, to quinones in the respiratory chain. The immediate electron acceptor for the enzyme in this species is believed to be ubiquinone. Couples the redox reaction to proton translocation (for every two electrons transferred, four hydrogen ions are translocated across the cytoplasmic membrane), and thus conserves the redox energy in a proton gradient.</text>
</comment>
<comment type="catalytic activity">
    <reaction evidence="1">
        <text>a quinone + NADH + 5 H(+)(in) = a quinol + NAD(+) + 4 H(+)(out)</text>
        <dbReference type="Rhea" id="RHEA:57888"/>
        <dbReference type="ChEBI" id="CHEBI:15378"/>
        <dbReference type="ChEBI" id="CHEBI:24646"/>
        <dbReference type="ChEBI" id="CHEBI:57540"/>
        <dbReference type="ChEBI" id="CHEBI:57945"/>
        <dbReference type="ChEBI" id="CHEBI:132124"/>
    </reaction>
</comment>
<comment type="subunit">
    <text evidence="1">NDH-1 is composed of 14 different subunits. Subunits NuoA, H, J, K, L, M, N constitute the membrane sector of the complex.</text>
</comment>
<comment type="subcellular location">
    <subcellularLocation>
        <location evidence="1">Cell inner membrane</location>
        <topology evidence="1">Multi-pass membrane protein</topology>
    </subcellularLocation>
</comment>
<comment type="similarity">
    <text evidence="1">Belongs to the complex I subunit 3 family.</text>
</comment>
<feature type="chain" id="PRO_0000362716" description="NADH-quinone oxidoreductase subunit A">
    <location>
        <begin position="1"/>
        <end position="119"/>
    </location>
</feature>
<feature type="transmembrane region" description="Helical" evidence="1">
    <location>
        <begin position="7"/>
        <end position="27"/>
    </location>
</feature>
<feature type="transmembrane region" description="Helical" evidence="1">
    <location>
        <begin position="63"/>
        <end position="83"/>
    </location>
</feature>
<feature type="transmembrane region" description="Helical" evidence="1">
    <location>
        <begin position="88"/>
        <end position="108"/>
    </location>
</feature>
<proteinExistence type="inferred from homology"/>
<accession>B1XUJ8</accession>
<dbReference type="EC" id="7.1.1.-" evidence="1"/>
<dbReference type="EMBL" id="CP001010">
    <property type="protein sequence ID" value="ACB44025.1"/>
    <property type="molecule type" value="Genomic_DNA"/>
</dbReference>
<dbReference type="SMR" id="B1XUJ8"/>
<dbReference type="STRING" id="452638.Pnec_0821"/>
<dbReference type="KEGG" id="pne:Pnec_0821"/>
<dbReference type="eggNOG" id="COG0838">
    <property type="taxonomic scope" value="Bacteria"/>
</dbReference>
<dbReference type="HOGENOM" id="CLU_119549_3_1_4"/>
<dbReference type="OrthoDB" id="9791970at2"/>
<dbReference type="GO" id="GO:0030964">
    <property type="term" value="C:NADH dehydrogenase complex"/>
    <property type="evidence" value="ECO:0007669"/>
    <property type="project" value="TreeGrafter"/>
</dbReference>
<dbReference type="GO" id="GO:0005886">
    <property type="term" value="C:plasma membrane"/>
    <property type="evidence" value="ECO:0007669"/>
    <property type="project" value="UniProtKB-SubCell"/>
</dbReference>
<dbReference type="GO" id="GO:0008137">
    <property type="term" value="F:NADH dehydrogenase (ubiquinone) activity"/>
    <property type="evidence" value="ECO:0007669"/>
    <property type="project" value="InterPro"/>
</dbReference>
<dbReference type="GO" id="GO:0050136">
    <property type="term" value="F:NADH:ubiquinone reductase (non-electrogenic) activity"/>
    <property type="evidence" value="ECO:0007669"/>
    <property type="project" value="UniProtKB-UniRule"/>
</dbReference>
<dbReference type="GO" id="GO:0048038">
    <property type="term" value="F:quinone binding"/>
    <property type="evidence" value="ECO:0007669"/>
    <property type="project" value="UniProtKB-KW"/>
</dbReference>
<dbReference type="FunFam" id="1.20.58.1610:FF:000004">
    <property type="entry name" value="NADH-quinone oxidoreductase subunit A"/>
    <property type="match status" value="1"/>
</dbReference>
<dbReference type="Gene3D" id="1.20.58.1610">
    <property type="entry name" value="NADH:ubiquinone/plastoquinone oxidoreductase, chain 3"/>
    <property type="match status" value="1"/>
</dbReference>
<dbReference type="HAMAP" id="MF_01394">
    <property type="entry name" value="NDH1_NuoA"/>
    <property type="match status" value="1"/>
</dbReference>
<dbReference type="InterPro" id="IPR023043">
    <property type="entry name" value="NAD(P)H_OxRDtase_bac/plastid"/>
</dbReference>
<dbReference type="InterPro" id="IPR000440">
    <property type="entry name" value="NADH_UbQ/plastoQ_OxRdtase_su3"/>
</dbReference>
<dbReference type="InterPro" id="IPR038430">
    <property type="entry name" value="NDAH_ubi_oxred_su3_sf"/>
</dbReference>
<dbReference type="PANTHER" id="PTHR11058">
    <property type="entry name" value="NADH-UBIQUINONE OXIDOREDUCTASE CHAIN 3"/>
    <property type="match status" value="1"/>
</dbReference>
<dbReference type="PANTHER" id="PTHR11058:SF9">
    <property type="entry name" value="NADH-UBIQUINONE OXIDOREDUCTASE CHAIN 3"/>
    <property type="match status" value="1"/>
</dbReference>
<dbReference type="Pfam" id="PF00507">
    <property type="entry name" value="Oxidored_q4"/>
    <property type="match status" value="1"/>
</dbReference>